<proteinExistence type="evidence at transcript level"/>
<evidence type="ECO:0000250" key="1">
    <source>
        <dbReference type="UniProtKB" id="Q8TBF2"/>
    </source>
</evidence>
<evidence type="ECO:0000250" key="2">
    <source>
        <dbReference type="UniProtKB" id="Q9DB60"/>
    </source>
</evidence>
<evidence type="ECO:0000305" key="3"/>
<organism>
    <name type="scientific">Bos taurus</name>
    <name type="common">Bovine</name>
    <dbReference type="NCBI Taxonomy" id="9913"/>
    <lineage>
        <taxon>Eukaryota</taxon>
        <taxon>Metazoa</taxon>
        <taxon>Chordata</taxon>
        <taxon>Craniata</taxon>
        <taxon>Vertebrata</taxon>
        <taxon>Euteleostomi</taxon>
        <taxon>Mammalia</taxon>
        <taxon>Eutheria</taxon>
        <taxon>Laurasiatheria</taxon>
        <taxon>Artiodactyla</taxon>
        <taxon>Ruminantia</taxon>
        <taxon>Pecora</taxon>
        <taxon>Bovidae</taxon>
        <taxon>Bovinae</taxon>
        <taxon>Bos</taxon>
    </lineage>
</organism>
<accession>Q58CY6</accession>
<accession>A4FUH8</accession>
<dbReference type="EC" id="1.11.1.20" evidence="2"/>
<dbReference type="EMBL" id="BT021811">
    <property type="protein sequence ID" value="AAX46658.1"/>
    <property type="molecule type" value="mRNA"/>
</dbReference>
<dbReference type="EMBL" id="BC114900">
    <property type="protein sequence ID" value="AAI14901.1"/>
    <property type="molecule type" value="mRNA"/>
</dbReference>
<dbReference type="RefSeq" id="NP_001035688.1">
    <property type="nucleotide sequence ID" value="NM_001040598.1"/>
</dbReference>
<dbReference type="SMR" id="Q58CY6"/>
<dbReference type="FunCoup" id="Q58CY6">
    <property type="interactions" value="42"/>
</dbReference>
<dbReference type="STRING" id="9913.ENSBTAP00000002262"/>
<dbReference type="PaxDb" id="9913-ENSBTAP00000002262"/>
<dbReference type="GeneID" id="617001"/>
<dbReference type="KEGG" id="bta:617001"/>
<dbReference type="CTD" id="127281"/>
<dbReference type="eggNOG" id="KOG4498">
    <property type="taxonomic scope" value="Eukaryota"/>
</dbReference>
<dbReference type="HOGENOM" id="CLU_094994_0_0_1"/>
<dbReference type="InParanoid" id="Q58CY6"/>
<dbReference type="OrthoDB" id="40334at2759"/>
<dbReference type="TreeFam" id="TF313804"/>
<dbReference type="Proteomes" id="UP000009136">
    <property type="component" value="Unplaced"/>
</dbReference>
<dbReference type="GO" id="GO:0005737">
    <property type="term" value="C:cytoplasm"/>
    <property type="evidence" value="ECO:0000250"/>
    <property type="project" value="CAFA"/>
</dbReference>
<dbReference type="GO" id="GO:0005829">
    <property type="term" value="C:cytosol"/>
    <property type="evidence" value="ECO:0007669"/>
    <property type="project" value="UniProtKB-SubCell"/>
</dbReference>
<dbReference type="GO" id="GO:0005783">
    <property type="term" value="C:endoplasmic reticulum"/>
    <property type="evidence" value="ECO:0000250"/>
    <property type="project" value="CAFA"/>
</dbReference>
<dbReference type="GO" id="GO:0043209">
    <property type="term" value="C:myelin sheath"/>
    <property type="evidence" value="ECO:0000250"/>
    <property type="project" value="CAFA"/>
</dbReference>
<dbReference type="GO" id="GO:0016616">
    <property type="term" value="F:oxidoreductase activity, acting on the CH-OH group of donors, NAD or NADP as acceptor"/>
    <property type="evidence" value="ECO:0000250"/>
    <property type="project" value="UniProtKB"/>
</dbReference>
<dbReference type="GO" id="GO:0047017">
    <property type="term" value="F:prostaglandin F synthase activity"/>
    <property type="evidence" value="ECO:0000250"/>
    <property type="project" value="CAFA"/>
</dbReference>
<dbReference type="GO" id="GO:0001516">
    <property type="term" value="P:prostaglandin biosynthetic process"/>
    <property type="evidence" value="ECO:0000250"/>
    <property type="project" value="UniProtKB"/>
</dbReference>
<dbReference type="CDD" id="cd02970">
    <property type="entry name" value="PRX_like2"/>
    <property type="match status" value="1"/>
</dbReference>
<dbReference type="FunFam" id="3.40.30.10:FF:000243">
    <property type="entry name" value="Prostamide/prostaglandin F synthase"/>
    <property type="match status" value="1"/>
</dbReference>
<dbReference type="InterPro" id="IPR032801">
    <property type="entry name" value="PXL2A/B/C"/>
</dbReference>
<dbReference type="InterPro" id="IPR036249">
    <property type="entry name" value="Thioredoxin-like_sf"/>
</dbReference>
<dbReference type="PANTHER" id="PTHR28630">
    <property type="match status" value="1"/>
</dbReference>
<dbReference type="PANTHER" id="PTHR28630:SF29">
    <property type="entry name" value="PROSTAMIDE_PROSTAGLANDIN F SYNTHASE"/>
    <property type="match status" value="1"/>
</dbReference>
<dbReference type="Pfam" id="PF13911">
    <property type="entry name" value="AhpC-TSA_2"/>
    <property type="match status" value="1"/>
</dbReference>
<dbReference type="SUPFAM" id="SSF52833">
    <property type="entry name" value="Thioredoxin-like"/>
    <property type="match status" value="1"/>
</dbReference>
<name>PXL2B_BOVIN</name>
<comment type="function">
    <text evidence="2">Catalyzes the reduction of prostaglandin-ethanolamide H(2) (prostamide H(2)) to prostamide F(2alpha) with NADPH as proton donor. Also able to reduce prostaglandin H(2) to prostaglandin F(2alpha) (By similarity).</text>
</comment>
<comment type="catalytic activity">
    <reaction evidence="2">
        <text>prostaglandin H2 + [thioredoxin]-dithiol = prostaglandin F2alpha + [thioredoxin]-disulfide</text>
        <dbReference type="Rhea" id="RHEA:28214"/>
        <dbReference type="Rhea" id="RHEA-COMP:10698"/>
        <dbReference type="Rhea" id="RHEA-COMP:10700"/>
        <dbReference type="ChEBI" id="CHEBI:29950"/>
        <dbReference type="ChEBI" id="CHEBI:50058"/>
        <dbReference type="ChEBI" id="CHEBI:57404"/>
        <dbReference type="ChEBI" id="CHEBI:57405"/>
        <dbReference type="EC" id="1.11.1.20"/>
    </reaction>
</comment>
<comment type="catalytic activity">
    <reaction evidence="2">
        <text>prostamide F2alpha + [thioredoxin]-disulfide = prostamide H2 + [thioredoxin]-dithiol</text>
        <dbReference type="Rhea" id="RHEA:26373"/>
        <dbReference type="Rhea" id="RHEA-COMP:10698"/>
        <dbReference type="Rhea" id="RHEA-COMP:10700"/>
        <dbReference type="ChEBI" id="CHEBI:29950"/>
        <dbReference type="ChEBI" id="CHEBI:50058"/>
        <dbReference type="ChEBI" id="CHEBI:53081"/>
        <dbReference type="ChEBI" id="CHEBI:53082"/>
        <dbReference type="EC" id="1.11.1.20"/>
    </reaction>
</comment>
<comment type="subcellular location">
    <subcellularLocation>
        <location evidence="2">Cytoplasm</location>
        <location evidence="2">Cytosol</location>
    </subcellularLocation>
</comment>
<comment type="similarity">
    <text evidence="3">Belongs to the peroxiredoxin-like PRXL2 family. Prostamide/prostaglandin F synthase subfamily.</text>
</comment>
<keyword id="KW-0963">Cytoplasm</keyword>
<keyword id="KW-0275">Fatty acid biosynthesis</keyword>
<keyword id="KW-0276">Fatty acid metabolism</keyword>
<keyword id="KW-0444">Lipid biosynthesis</keyword>
<keyword id="KW-0443">Lipid metabolism</keyword>
<keyword id="KW-0521">NADP</keyword>
<keyword id="KW-0560">Oxidoreductase</keyword>
<keyword id="KW-0597">Phosphoprotein</keyword>
<keyword id="KW-0643">Prostaglandin biosynthesis</keyword>
<keyword id="KW-0644">Prostaglandin metabolism</keyword>
<keyword id="KW-1185">Reference proteome</keyword>
<gene>
    <name type="primary">PRXL2B</name>
    <name type="synonym">FAM213B</name>
</gene>
<protein>
    <recommendedName>
        <fullName>Prostamide/prostaglandin F synthase</fullName>
        <shortName>Prostamide/PG F synthase</shortName>
        <shortName>Prostamide/PGF synthase</shortName>
        <ecNumber evidence="2">1.11.1.20</ecNumber>
    </recommendedName>
    <alternativeName>
        <fullName>Peroxiredoxin-like 2B</fullName>
    </alternativeName>
</protein>
<feature type="chain" id="PRO_0000284636" description="Prostamide/prostaglandin F synthase">
    <location>
        <begin position="1"/>
        <end position="201"/>
    </location>
</feature>
<feature type="modified residue" description="Phosphotyrosine" evidence="1">
    <location>
        <position position="108"/>
    </location>
</feature>
<feature type="sequence conflict" description="In Ref. 2; AAI14901." evidence="3" ref="2">
    <original>L</original>
    <variation>P</variation>
    <location>
        <position position="191"/>
    </location>
</feature>
<reference key="1">
    <citation type="journal article" date="2005" name="BMC Genomics">
        <title>Characterization of 954 bovine full-CDS cDNA sequences.</title>
        <authorList>
            <person name="Harhay G.P."/>
            <person name="Sonstegard T.S."/>
            <person name="Keele J.W."/>
            <person name="Heaton M.P."/>
            <person name="Clawson M.L."/>
            <person name="Snelling W.M."/>
            <person name="Wiedmann R.T."/>
            <person name="Van Tassell C.P."/>
            <person name="Smith T.P.L."/>
        </authorList>
    </citation>
    <scope>NUCLEOTIDE SEQUENCE [LARGE SCALE MRNA]</scope>
</reference>
<reference key="2">
    <citation type="submission" date="2006-04" db="EMBL/GenBank/DDBJ databases">
        <authorList>
            <consortium name="NIH - Mammalian Gene Collection (MGC) project"/>
        </authorList>
    </citation>
    <scope>NUCLEOTIDE SEQUENCE [LARGE SCALE MRNA]</scope>
    <source>
        <strain>Hereford</strain>
        <tissue>Fetal muscle</tissue>
    </source>
</reference>
<sequence>MSTVDLARVGACVLKHAVTGEAVELRNLWQEQACVVAGLRRFGCMVCRWIARDLSNLKGLLDQHGVRLVGVGPEALGLQEFLDGGYFAGELYLDESKQFYKELGFKRYNSLSILPAALGKPVREVAAKAKAVGIQGNLSGDLLQSGGLLVVAKGGDKVLLHFVQKSPGDYAPLESILQALGISAEVGPSELPQCDEEACSR</sequence>